<organism>
    <name type="scientific">Mus musculus</name>
    <name type="common">Mouse</name>
    <dbReference type="NCBI Taxonomy" id="10090"/>
    <lineage>
        <taxon>Eukaryota</taxon>
        <taxon>Metazoa</taxon>
        <taxon>Chordata</taxon>
        <taxon>Craniata</taxon>
        <taxon>Vertebrata</taxon>
        <taxon>Euteleostomi</taxon>
        <taxon>Mammalia</taxon>
        <taxon>Eutheria</taxon>
        <taxon>Euarchontoglires</taxon>
        <taxon>Glires</taxon>
        <taxon>Rodentia</taxon>
        <taxon>Myomorpha</taxon>
        <taxon>Muroidea</taxon>
        <taxon>Muridae</taxon>
        <taxon>Murinae</taxon>
        <taxon>Mus</taxon>
        <taxon>Mus</taxon>
    </lineage>
</organism>
<reference key="1">
    <citation type="submission" date="1999-06" db="EMBL/GenBank/DDBJ databases">
        <title>Cloning, characterization and bacterial expression of full length cDNA for the mouse liver microsomal glutathione S-transferase.</title>
        <authorList>
            <person name="Raza H."/>
            <person name="Mullick J."/>
            <person name="Avadhani N.G."/>
        </authorList>
    </citation>
    <scope>NUCLEOTIDE SEQUENCE [MRNA]</scope>
    <source>
        <strain>BALB/cJ</strain>
    </source>
</reference>
<reference key="2">
    <citation type="journal article" date="2005" name="Science">
        <title>The transcriptional landscape of the mammalian genome.</title>
        <authorList>
            <person name="Carninci P."/>
            <person name="Kasukawa T."/>
            <person name="Katayama S."/>
            <person name="Gough J."/>
            <person name="Frith M.C."/>
            <person name="Maeda N."/>
            <person name="Oyama R."/>
            <person name="Ravasi T."/>
            <person name="Lenhard B."/>
            <person name="Wells C."/>
            <person name="Kodzius R."/>
            <person name="Shimokawa K."/>
            <person name="Bajic V.B."/>
            <person name="Brenner S.E."/>
            <person name="Batalov S."/>
            <person name="Forrest A.R."/>
            <person name="Zavolan M."/>
            <person name="Davis M.J."/>
            <person name="Wilming L.G."/>
            <person name="Aidinis V."/>
            <person name="Allen J.E."/>
            <person name="Ambesi-Impiombato A."/>
            <person name="Apweiler R."/>
            <person name="Aturaliya R.N."/>
            <person name="Bailey T.L."/>
            <person name="Bansal M."/>
            <person name="Baxter L."/>
            <person name="Beisel K.W."/>
            <person name="Bersano T."/>
            <person name="Bono H."/>
            <person name="Chalk A.M."/>
            <person name="Chiu K.P."/>
            <person name="Choudhary V."/>
            <person name="Christoffels A."/>
            <person name="Clutterbuck D.R."/>
            <person name="Crowe M.L."/>
            <person name="Dalla E."/>
            <person name="Dalrymple B.P."/>
            <person name="de Bono B."/>
            <person name="Della Gatta G."/>
            <person name="di Bernardo D."/>
            <person name="Down T."/>
            <person name="Engstrom P."/>
            <person name="Fagiolini M."/>
            <person name="Faulkner G."/>
            <person name="Fletcher C.F."/>
            <person name="Fukushima T."/>
            <person name="Furuno M."/>
            <person name="Futaki S."/>
            <person name="Gariboldi M."/>
            <person name="Georgii-Hemming P."/>
            <person name="Gingeras T.R."/>
            <person name="Gojobori T."/>
            <person name="Green R.E."/>
            <person name="Gustincich S."/>
            <person name="Harbers M."/>
            <person name="Hayashi Y."/>
            <person name="Hensch T.K."/>
            <person name="Hirokawa N."/>
            <person name="Hill D."/>
            <person name="Huminiecki L."/>
            <person name="Iacono M."/>
            <person name="Ikeo K."/>
            <person name="Iwama A."/>
            <person name="Ishikawa T."/>
            <person name="Jakt M."/>
            <person name="Kanapin A."/>
            <person name="Katoh M."/>
            <person name="Kawasawa Y."/>
            <person name="Kelso J."/>
            <person name="Kitamura H."/>
            <person name="Kitano H."/>
            <person name="Kollias G."/>
            <person name="Krishnan S.P."/>
            <person name="Kruger A."/>
            <person name="Kummerfeld S.K."/>
            <person name="Kurochkin I.V."/>
            <person name="Lareau L.F."/>
            <person name="Lazarevic D."/>
            <person name="Lipovich L."/>
            <person name="Liu J."/>
            <person name="Liuni S."/>
            <person name="McWilliam S."/>
            <person name="Madan Babu M."/>
            <person name="Madera M."/>
            <person name="Marchionni L."/>
            <person name="Matsuda H."/>
            <person name="Matsuzawa S."/>
            <person name="Miki H."/>
            <person name="Mignone F."/>
            <person name="Miyake S."/>
            <person name="Morris K."/>
            <person name="Mottagui-Tabar S."/>
            <person name="Mulder N."/>
            <person name="Nakano N."/>
            <person name="Nakauchi H."/>
            <person name="Ng P."/>
            <person name="Nilsson R."/>
            <person name="Nishiguchi S."/>
            <person name="Nishikawa S."/>
            <person name="Nori F."/>
            <person name="Ohara O."/>
            <person name="Okazaki Y."/>
            <person name="Orlando V."/>
            <person name="Pang K.C."/>
            <person name="Pavan W.J."/>
            <person name="Pavesi G."/>
            <person name="Pesole G."/>
            <person name="Petrovsky N."/>
            <person name="Piazza S."/>
            <person name="Reed J."/>
            <person name="Reid J.F."/>
            <person name="Ring B.Z."/>
            <person name="Ringwald M."/>
            <person name="Rost B."/>
            <person name="Ruan Y."/>
            <person name="Salzberg S.L."/>
            <person name="Sandelin A."/>
            <person name="Schneider C."/>
            <person name="Schoenbach C."/>
            <person name="Sekiguchi K."/>
            <person name="Semple C.A."/>
            <person name="Seno S."/>
            <person name="Sessa L."/>
            <person name="Sheng Y."/>
            <person name="Shibata Y."/>
            <person name="Shimada H."/>
            <person name="Shimada K."/>
            <person name="Silva D."/>
            <person name="Sinclair B."/>
            <person name="Sperling S."/>
            <person name="Stupka E."/>
            <person name="Sugiura K."/>
            <person name="Sultana R."/>
            <person name="Takenaka Y."/>
            <person name="Taki K."/>
            <person name="Tammoja K."/>
            <person name="Tan S.L."/>
            <person name="Tang S."/>
            <person name="Taylor M.S."/>
            <person name="Tegner J."/>
            <person name="Teichmann S.A."/>
            <person name="Ueda H.R."/>
            <person name="van Nimwegen E."/>
            <person name="Verardo R."/>
            <person name="Wei C.L."/>
            <person name="Yagi K."/>
            <person name="Yamanishi H."/>
            <person name="Zabarovsky E."/>
            <person name="Zhu S."/>
            <person name="Zimmer A."/>
            <person name="Hide W."/>
            <person name="Bult C."/>
            <person name="Grimmond S.M."/>
            <person name="Teasdale R.D."/>
            <person name="Liu E.T."/>
            <person name="Brusic V."/>
            <person name="Quackenbush J."/>
            <person name="Wahlestedt C."/>
            <person name="Mattick J.S."/>
            <person name="Hume D.A."/>
            <person name="Kai C."/>
            <person name="Sasaki D."/>
            <person name="Tomaru Y."/>
            <person name="Fukuda S."/>
            <person name="Kanamori-Katayama M."/>
            <person name="Suzuki M."/>
            <person name="Aoki J."/>
            <person name="Arakawa T."/>
            <person name="Iida J."/>
            <person name="Imamura K."/>
            <person name="Itoh M."/>
            <person name="Kato T."/>
            <person name="Kawaji H."/>
            <person name="Kawagashira N."/>
            <person name="Kawashima T."/>
            <person name="Kojima M."/>
            <person name="Kondo S."/>
            <person name="Konno H."/>
            <person name="Nakano K."/>
            <person name="Ninomiya N."/>
            <person name="Nishio T."/>
            <person name="Okada M."/>
            <person name="Plessy C."/>
            <person name="Shibata K."/>
            <person name="Shiraki T."/>
            <person name="Suzuki S."/>
            <person name="Tagami M."/>
            <person name="Waki K."/>
            <person name="Watahiki A."/>
            <person name="Okamura-Oho Y."/>
            <person name="Suzuki H."/>
            <person name="Kawai J."/>
            <person name="Hayashizaki Y."/>
        </authorList>
    </citation>
    <scope>NUCLEOTIDE SEQUENCE [LARGE SCALE MRNA]</scope>
    <source>
        <strain>C57BL/6J</strain>
        <tissue>Cerebellum</tissue>
        <tissue>Kidney</tissue>
    </source>
</reference>
<reference key="3">
    <citation type="journal article" date="2004" name="Genome Res.">
        <title>The status, quality, and expansion of the NIH full-length cDNA project: the Mammalian Gene Collection (MGC).</title>
        <authorList>
            <consortium name="The MGC Project Team"/>
        </authorList>
    </citation>
    <scope>NUCLEOTIDE SEQUENCE [LARGE SCALE MRNA]</scope>
    <source>
        <tissue>Mammary tumor</tissue>
    </source>
</reference>
<reference key="4">
    <citation type="journal article" date="2010" name="Cell">
        <title>A tissue-specific atlas of mouse protein phosphorylation and expression.</title>
        <authorList>
            <person name="Huttlin E.L."/>
            <person name="Jedrychowski M.P."/>
            <person name="Elias J.E."/>
            <person name="Goswami T."/>
            <person name="Rad R."/>
            <person name="Beausoleil S.A."/>
            <person name="Villen J."/>
            <person name="Haas W."/>
            <person name="Sowa M.E."/>
            <person name="Gygi S.P."/>
        </authorList>
    </citation>
    <scope>IDENTIFICATION BY MASS SPECTROMETRY [LARGE SCALE ANALYSIS]</scope>
    <source>
        <tissue>Brown adipose tissue</tissue>
        <tissue>Heart</tissue>
        <tissue>Kidney</tissue>
        <tissue>Liver</tissue>
        <tissue>Lung</tissue>
        <tissue>Pancreas</tissue>
        <tissue>Spleen</tissue>
        <tissue>Testis</tissue>
    </source>
</reference>
<reference key="5">
    <citation type="journal article" date="2013" name="Proc. Natl. Acad. Sci. U.S.A.">
        <title>Label-free quantitative proteomics of the lysine acetylome in mitochondria identifies substrates of SIRT3 in metabolic pathways.</title>
        <authorList>
            <person name="Rardin M.J."/>
            <person name="Newman J.C."/>
            <person name="Held J.M."/>
            <person name="Cusack M.P."/>
            <person name="Sorensen D.J."/>
            <person name="Li B."/>
            <person name="Schilling B."/>
            <person name="Mooney S.D."/>
            <person name="Kahn C.R."/>
            <person name="Verdin E."/>
            <person name="Gibson B.W."/>
        </authorList>
    </citation>
    <scope>ACETYLATION [LARGE SCALE ANALYSIS] AT LYS-42; LYS-55 AND LYS-60</scope>
    <scope>IDENTIFICATION BY MASS SPECTROMETRY [LARGE SCALE ANALYSIS]</scope>
    <source>
        <tissue>Liver</tissue>
    </source>
</reference>
<reference key="6">
    <citation type="journal article" date="2022" name="Front. Cell Dev. Biol.">
        <title>TMPRSS12 Functions in Meiosis and Spermiogenesis and Is Required for Male Fertility in Mice.</title>
        <authorList>
            <person name="Zhang J."/>
            <person name="Zhou X."/>
            <person name="Wan D."/>
            <person name="Yu L."/>
            <person name="Chen X."/>
            <person name="Yan T."/>
            <person name="Wu Z."/>
            <person name="Zheng M."/>
            <person name="Zhu F."/>
            <person name="Zhu H."/>
        </authorList>
    </citation>
    <scope>TISSUE SPECIFICITY</scope>
</reference>
<proteinExistence type="evidence at protein level"/>
<feature type="chain" id="PRO_0000217737" description="Microsomal glutathione S-transferase 1">
    <location>
        <begin position="1"/>
        <end position="155"/>
    </location>
</feature>
<feature type="topological domain" description="Lumenal" evidence="1">
    <location>
        <begin position="3"/>
        <end position="9"/>
    </location>
</feature>
<feature type="transmembrane region" description="Helical" evidence="2">
    <location>
        <begin position="10"/>
        <end position="33"/>
    </location>
</feature>
<feature type="topological domain" description="Cytoplasmic" evidence="1">
    <location>
        <begin position="34"/>
        <end position="62"/>
    </location>
</feature>
<feature type="transmembrane region" description="Helical" evidence="2">
    <location>
        <begin position="63"/>
        <end position="96"/>
    </location>
</feature>
<feature type="topological domain" description="Lumenal" evidence="1">
    <location>
        <begin position="97"/>
        <end position="99"/>
    </location>
</feature>
<feature type="transmembrane region" description="Helical" evidence="2">
    <location>
        <begin position="100"/>
        <end position="123"/>
    </location>
</feature>
<feature type="topological domain" description="Cytoplasmic" evidence="1">
    <location>
        <begin position="124"/>
        <end position="128"/>
    </location>
</feature>
<feature type="transmembrane region" description="Helical" evidence="2">
    <location>
        <begin position="129"/>
        <end position="148"/>
    </location>
</feature>
<feature type="topological domain" description="Lumenal" evidence="1">
    <location>
        <begin position="149"/>
        <end position="155"/>
    </location>
</feature>
<feature type="binding site" evidence="1">
    <location>
        <position position="38"/>
    </location>
    <ligand>
        <name>glutathione</name>
        <dbReference type="ChEBI" id="CHEBI:57925"/>
    </ligand>
</feature>
<feature type="binding site" evidence="1">
    <location>
        <position position="73"/>
    </location>
    <ligand>
        <name>glutathione</name>
        <dbReference type="ChEBI" id="CHEBI:57925"/>
    </ligand>
</feature>
<feature type="binding site" evidence="1">
    <location>
        <position position="74"/>
    </location>
    <ligand>
        <name>glutathione</name>
        <dbReference type="ChEBI" id="CHEBI:57925"/>
    </ligand>
</feature>
<feature type="binding site" evidence="1">
    <location>
        <position position="76"/>
    </location>
    <ligand>
        <name>glutathione</name>
        <dbReference type="ChEBI" id="CHEBI:57925"/>
    </ligand>
</feature>
<feature type="binding site" evidence="1">
    <location>
        <position position="81"/>
    </location>
    <ligand>
        <name>glutathione</name>
        <dbReference type="ChEBI" id="CHEBI:57925"/>
    </ligand>
</feature>
<feature type="binding site" evidence="1">
    <location>
        <position position="121"/>
    </location>
    <ligand>
        <name>glutathione</name>
        <dbReference type="ChEBI" id="CHEBI:57925"/>
    </ligand>
</feature>
<feature type="modified residue" description="N6-acetyllysine" evidence="6">
    <location>
        <position position="42"/>
    </location>
</feature>
<feature type="modified residue" description="N6-acetyllysine" evidence="6">
    <location>
        <position position="55"/>
    </location>
</feature>
<feature type="modified residue" description="N6-acetyllysine" evidence="6">
    <location>
        <position position="60"/>
    </location>
</feature>
<feature type="sequence conflict" description="In Ref. 1; AAD51096." evidence="5" ref="1">
    <original>R</original>
    <variation>K</variation>
    <location>
        <position position="5"/>
    </location>
</feature>
<feature type="sequence conflict" description="In Ref. 3; AAH09155." evidence="5" ref="3">
    <original>G</original>
    <variation>V</variation>
    <location>
        <position position="56"/>
    </location>
</feature>
<evidence type="ECO:0000250" key="1">
    <source>
        <dbReference type="UniProtKB" id="P08011"/>
    </source>
</evidence>
<evidence type="ECO:0000255" key="2"/>
<evidence type="ECO:0000269" key="3">
    <source>
    </source>
</evidence>
<evidence type="ECO:0000269" key="4">
    <source>
    </source>
</evidence>
<evidence type="ECO:0000305" key="5"/>
<evidence type="ECO:0007744" key="6">
    <source>
    </source>
</evidence>
<keyword id="KW-0007">Acetylation</keyword>
<keyword id="KW-0256">Endoplasmic reticulum</keyword>
<keyword id="KW-0472">Membrane</keyword>
<keyword id="KW-0496">Mitochondrion</keyword>
<keyword id="KW-1000">Mitochondrion outer membrane</keyword>
<keyword id="KW-1185">Reference proteome</keyword>
<keyword id="KW-0808">Transferase</keyword>
<keyword id="KW-0812">Transmembrane</keyword>
<keyword id="KW-1133">Transmembrane helix</keyword>
<name>MGST1_MOUSE</name>
<gene>
    <name type="primary">Mgst1</name>
</gene>
<comment type="function">
    <text evidence="1">Conjugation of reduced glutathione to a wide number of exogenous and endogenous hydrophobic electrophiles.</text>
</comment>
<comment type="catalytic activity">
    <reaction evidence="1">
        <text>RX + glutathione = an S-substituted glutathione + a halide anion + H(+)</text>
        <dbReference type="Rhea" id="RHEA:16437"/>
        <dbReference type="ChEBI" id="CHEBI:15378"/>
        <dbReference type="ChEBI" id="CHEBI:16042"/>
        <dbReference type="ChEBI" id="CHEBI:17792"/>
        <dbReference type="ChEBI" id="CHEBI:57925"/>
        <dbReference type="ChEBI" id="CHEBI:90779"/>
        <dbReference type="EC" id="2.5.1.18"/>
    </reaction>
    <physiologicalReaction direction="left-to-right" evidence="1">
        <dbReference type="Rhea" id="RHEA:16438"/>
    </physiologicalReaction>
</comment>
<comment type="subunit">
    <text evidence="1">Homotrimer; The trimer binds only one molecule of glutathione.</text>
</comment>
<comment type="subcellular location">
    <subcellularLocation>
        <location evidence="1">Endoplasmic reticulum membrane</location>
        <topology evidence="2">Multi-pass membrane protein</topology>
    </subcellularLocation>
    <subcellularLocation>
        <location evidence="1">Mitochondrion outer membrane</location>
    </subcellularLocation>
</comment>
<comment type="tissue specificity">
    <text evidence="4">Expressed in the testes (at protein level).</text>
</comment>
<comment type="PTM">
    <text evidence="3">Acetylation of Lys-42 and Lys-55 is observed in liver mitochondria from fasted mice but not from fed mice.</text>
</comment>
<comment type="similarity">
    <text evidence="5">Belongs to the MAPEG family.</text>
</comment>
<protein>
    <recommendedName>
        <fullName>Microsomal glutathione S-transferase 1</fullName>
        <shortName>Microsomal GST-1</shortName>
        <ecNumber evidence="1">2.5.1.18</ecNumber>
    </recommendedName>
    <alternativeName>
        <fullName>Microsomal GST-I</fullName>
    </alternativeName>
</protein>
<accession>Q91VS7</accession>
<accession>Q9CQ57</accession>
<accession>Q9R191</accession>
<sequence length="155" mass="17552">MADLRQLMDNEVLMAFTSYATIILTKMMFMSSATAFQRITNKVFANPEDCAGFGKGENAKKFVRTDEKVERVRRAHLNDLENIVPFLGIGLLYSLSGPDLSTALMHFRIFVGARIYHTIAYLTPLPQPNRGLAFFVGYGVTLSMAYRLLRSRLYL</sequence>
<dbReference type="EC" id="2.5.1.18" evidence="1"/>
<dbReference type="EMBL" id="AF159050">
    <property type="protein sequence ID" value="AAD51096.1"/>
    <property type="molecule type" value="mRNA"/>
</dbReference>
<dbReference type="EMBL" id="AK002800">
    <property type="protein sequence ID" value="BAB22368.1"/>
    <property type="molecule type" value="mRNA"/>
</dbReference>
<dbReference type="EMBL" id="AK005122">
    <property type="protein sequence ID" value="BAB23827.1"/>
    <property type="molecule type" value="mRNA"/>
</dbReference>
<dbReference type="EMBL" id="BC009155">
    <property type="protein sequence ID" value="AAH09155.1"/>
    <property type="molecule type" value="mRNA"/>
</dbReference>
<dbReference type="CCDS" id="CCDS20668.1"/>
<dbReference type="RefSeq" id="NP_001348237.1">
    <property type="nucleotide sequence ID" value="NM_001361308.1"/>
</dbReference>
<dbReference type="RefSeq" id="NP_001348238.1">
    <property type="nucleotide sequence ID" value="NM_001361309.1"/>
</dbReference>
<dbReference type="RefSeq" id="NP_064330.2">
    <property type="nucleotide sequence ID" value="NM_019946.4"/>
</dbReference>
<dbReference type="SMR" id="Q91VS7"/>
<dbReference type="BioGRID" id="208104">
    <property type="interactions" value="2"/>
</dbReference>
<dbReference type="FunCoup" id="Q91VS7">
    <property type="interactions" value="591"/>
</dbReference>
<dbReference type="STRING" id="10090.ENSMUSP00000112923"/>
<dbReference type="GlyGen" id="Q91VS7">
    <property type="glycosylation" value="1 site, 1 O-linked glycan (1 site)"/>
</dbReference>
<dbReference type="iPTMnet" id="Q91VS7"/>
<dbReference type="PhosphoSitePlus" id="Q91VS7"/>
<dbReference type="SwissPalm" id="Q91VS7"/>
<dbReference type="jPOST" id="Q91VS7"/>
<dbReference type="PaxDb" id="10090-ENSMUSP00000008684"/>
<dbReference type="ProteomicsDB" id="295939"/>
<dbReference type="Pumba" id="Q91VS7"/>
<dbReference type="Antibodypedia" id="23831">
    <property type="antibodies" value="226 antibodies from 32 providers"/>
</dbReference>
<dbReference type="DNASU" id="56615"/>
<dbReference type="Ensembl" id="ENSMUST00000008684.11">
    <property type="protein sequence ID" value="ENSMUSP00000008684.5"/>
    <property type="gene ID" value="ENSMUSG00000008540.12"/>
</dbReference>
<dbReference type="Ensembl" id="ENSMUST00000120230.8">
    <property type="protein sequence ID" value="ENSMUSP00000113859.2"/>
    <property type="gene ID" value="ENSMUSG00000008540.12"/>
</dbReference>
<dbReference type="Ensembl" id="ENSMUST00000120302.8">
    <property type="protein sequence ID" value="ENSMUSP00000113257.2"/>
    <property type="gene ID" value="ENSMUSG00000008540.12"/>
</dbReference>
<dbReference type="GeneID" id="56615"/>
<dbReference type="KEGG" id="mmu:56615"/>
<dbReference type="UCSC" id="uc009enk.1">
    <property type="organism name" value="mouse"/>
</dbReference>
<dbReference type="AGR" id="MGI:1913850"/>
<dbReference type="CTD" id="4257"/>
<dbReference type="MGI" id="MGI:1913850">
    <property type="gene designation" value="Mgst1"/>
</dbReference>
<dbReference type="VEuPathDB" id="HostDB:ENSMUSG00000008540"/>
<dbReference type="eggNOG" id="ENOG502S0BD">
    <property type="taxonomic scope" value="Eukaryota"/>
</dbReference>
<dbReference type="GeneTree" id="ENSGT00390000011980"/>
<dbReference type="HOGENOM" id="CLU_105467_1_0_1"/>
<dbReference type="InParanoid" id="Q91VS7"/>
<dbReference type="OMA" id="RAQRCHH"/>
<dbReference type="OrthoDB" id="193139at2759"/>
<dbReference type="PhylomeDB" id="Q91VS7"/>
<dbReference type="TreeFam" id="TF105327"/>
<dbReference type="Reactome" id="R-MMU-156590">
    <property type="pathway name" value="Glutathione conjugation"/>
</dbReference>
<dbReference type="Reactome" id="R-MMU-5423646">
    <property type="pathway name" value="Aflatoxin activation and detoxification"/>
</dbReference>
<dbReference type="Reactome" id="R-MMU-6798695">
    <property type="pathway name" value="Neutrophil degranulation"/>
</dbReference>
<dbReference type="BioGRID-ORCS" id="56615">
    <property type="hits" value="0 hits in 77 CRISPR screens"/>
</dbReference>
<dbReference type="ChiTaRS" id="Mgst1">
    <property type="organism name" value="mouse"/>
</dbReference>
<dbReference type="PRO" id="PR:Q91VS7"/>
<dbReference type="Proteomes" id="UP000000589">
    <property type="component" value="Chromosome 6"/>
</dbReference>
<dbReference type="RNAct" id="Q91VS7">
    <property type="molecule type" value="protein"/>
</dbReference>
<dbReference type="Bgee" id="ENSMUSG00000008540">
    <property type="expression patterns" value="Expressed in left lobe of liver and 288 other cell types or tissues"/>
</dbReference>
<dbReference type="ExpressionAtlas" id="Q91VS7">
    <property type="expression patterns" value="baseline and differential"/>
</dbReference>
<dbReference type="GO" id="GO:0005783">
    <property type="term" value="C:endoplasmic reticulum"/>
    <property type="evidence" value="ECO:0000250"/>
    <property type="project" value="UniProtKB"/>
</dbReference>
<dbReference type="GO" id="GO:0005789">
    <property type="term" value="C:endoplasmic reticulum membrane"/>
    <property type="evidence" value="ECO:0007669"/>
    <property type="project" value="UniProtKB-SubCell"/>
</dbReference>
<dbReference type="GO" id="GO:0016020">
    <property type="term" value="C:membrane"/>
    <property type="evidence" value="ECO:0000250"/>
    <property type="project" value="UniProtKB"/>
</dbReference>
<dbReference type="GO" id="GO:0005743">
    <property type="term" value="C:mitochondrial inner membrane"/>
    <property type="evidence" value="ECO:0007005"/>
    <property type="project" value="MGI"/>
</dbReference>
<dbReference type="GO" id="GO:0005741">
    <property type="term" value="C:mitochondrial outer membrane"/>
    <property type="evidence" value="ECO:0007669"/>
    <property type="project" value="UniProtKB-SubCell"/>
</dbReference>
<dbReference type="GO" id="GO:0005739">
    <property type="term" value="C:mitochondrion"/>
    <property type="evidence" value="ECO:0007005"/>
    <property type="project" value="MGI"/>
</dbReference>
<dbReference type="GO" id="GO:0004364">
    <property type="term" value="F:glutathione transferase activity"/>
    <property type="evidence" value="ECO:0000314"/>
    <property type="project" value="MGI"/>
</dbReference>
<dbReference type="GO" id="GO:0006749">
    <property type="term" value="P:glutathione metabolic process"/>
    <property type="evidence" value="ECO:0000314"/>
    <property type="project" value="MGI"/>
</dbReference>
<dbReference type="FunFam" id="1.20.120.550:FF:000002">
    <property type="entry name" value="Microsomal glutathione S-transferase 1"/>
    <property type="match status" value="1"/>
</dbReference>
<dbReference type="Gene3D" id="1.20.120.550">
    <property type="entry name" value="Membrane associated eicosanoid/glutathione metabolism-like domain"/>
    <property type="match status" value="1"/>
</dbReference>
<dbReference type="InterPro" id="IPR023352">
    <property type="entry name" value="MAPEG-like_dom_sf"/>
</dbReference>
<dbReference type="InterPro" id="IPR001129">
    <property type="entry name" value="Membr-assoc_MAPEG"/>
</dbReference>
<dbReference type="InterPro" id="IPR040162">
    <property type="entry name" value="MGST1-like"/>
</dbReference>
<dbReference type="PANTHER" id="PTHR10689">
    <property type="entry name" value="MICROSOMAL GLUTATHIONE S-TRANSFERASE 1"/>
    <property type="match status" value="1"/>
</dbReference>
<dbReference type="PANTHER" id="PTHR10689:SF6">
    <property type="entry name" value="MICROSOMAL GLUTATHIONE S-TRANSFERASE 1"/>
    <property type="match status" value="1"/>
</dbReference>
<dbReference type="Pfam" id="PF01124">
    <property type="entry name" value="MAPEG"/>
    <property type="match status" value="1"/>
</dbReference>
<dbReference type="SUPFAM" id="SSF161084">
    <property type="entry name" value="MAPEG domain-like"/>
    <property type="match status" value="1"/>
</dbReference>